<name>PSA_PYRAB</name>
<accession>Q9V122</accession>
<accession>G8ZJ72</accession>
<sequence>MAFVPPQAGYDRAITVFSPDGRLFQVNYAREAVKRGATAVGVKCKDGVVLAVEKRITSRLIEPESYEKIFQIDDHIAAASSGIIADARVLVNRARLEAQIHRLTYGEPAPLAVIVKKICDLKQMHTQYGGVRPFGAALLMAGVNDKPELYETDPSGAYFAWKAVAIGSGRNTAMAIFEDKYRDDMTLDEAIKLAIFALAKTMEKPSAENIEVAVITVKDKKFRKLSKEEIEKFLGEVMKEVEEEEVKEKEEDYSELDSHY</sequence>
<organism>
    <name type="scientific">Pyrococcus abyssi (strain GE5 / Orsay)</name>
    <dbReference type="NCBI Taxonomy" id="272844"/>
    <lineage>
        <taxon>Archaea</taxon>
        <taxon>Methanobacteriati</taxon>
        <taxon>Methanobacteriota</taxon>
        <taxon>Thermococci</taxon>
        <taxon>Thermococcales</taxon>
        <taxon>Thermococcaceae</taxon>
        <taxon>Pyrococcus</taxon>
    </lineage>
</organism>
<keyword id="KW-0963">Cytoplasm</keyword>
<keyword id="KW-0647">Proteasome</keyword>
<feature type="chain" id="PRO_0000124181" description="Proteasome subunit alpha">
    <location>
        <begin position="1"/>
        <end position="260"/>
    </location>
</feature>
<comment type="function">
    <text evidence="1">Component of the proteasome core, a large protease complex with broad specificity involved in protein degradation.</text>
</comment>
<comment type="activity regulation">
    <text evidence="1">The formation of the proteasomal ATPase PAN-20S proteasome complex, via the docking of the C-termini of PAN into the intersubunit pockets in the alpha-rings, triggers opening of the gate for substrate entry. Interconversion between the open-gate and close-gate conformations leads to a dynamic regulation of the 20S proteasome proteolysis activity.</text>
</comment>
<comment type="subunit">
    <text evidence="1">The 20S proteasome core is composed of 14 alpha and 14 beta subunits that assemble into four stacked heptameric rings, resulting in a barrel-shaped structure. The two inner rings, each composed of seven catalytic beta subunits, are sandwiched by two outer rings, each composed of seven alpha subunits. The catalytic chamber with the active sites is on the inside of the barrel. Has a gated structure, the ends of the cylinder being occluded by the N-termini of the alpha-subunits. Is capped at one or both ends by the proteasome regulatory ATPase, PAN.</text>
</comment>
<comment type="subcellular location">
    <subcellularLocation>
        <location evidence="1">Cytoplasm</location>
    </subcellularLocation>
</comment>
<comment type="similarity">
    <text evidence="1">Belongs to the peptidase T1A family.</text>
</comment>
<reference key="1">
    <citation type="journal article" date="2003" name="Mol. Microbiol.">
        <title>An integrated analysis of the genome of the hyperthermophilic archaeon Pyrococcus abyssi.</title>
        <authorList>
            <person name="Cohen G.N."/>
            <person name="Barbe V."/>
            <person name="Flament D."/>
            <person name="Galperin M."/>
            <person name="Heilig R."/>
            <person name="Lecompte O."/>
            <person name="Poch O."/>
            <person name="Prieur D."/>
            <person name="Querellou J."/>
            <person name="Ripp R."/>
            <person name="Thierry J.-C."/>
            <person name="Van der Oost J."/>
            <person name="Weissenbach J."/>
            <person name="Zivanovic Y."/>
            <person name="Forterre P."/>
        </authorList>
    </citation>
    <scope>NUCLEOTIDE SEQUENCE [LARGE SCALE GENOMIC DNA]</scope>
    <source>
        <strain>GE5 / Orsay</strain>
    </source>
</reference>
<reference key="2">
    <citation type="journal article" date="2012" name="Curr. Microbiol.">
        <title>Re-annotation of two hyperthermophilic archaea Pyrococcus abyssi GE5 and Pyrococcus furiosus DSM 3638.</title>
        <authorList>
            <person name="Gao J."/>
            <person name="Wang J."/>
        </authorList>
    </citation>
    <scope>GENOME REANNOTATION</scope>
    <source>
        <strain>GE5 / Orsay</strain>
    </source>
</reference>
<protein>
    <recommendedName>
        <fullName evidence="1">Proteasome subunit alpha</fullName>
    </recommendedName>
    <alternativeName>
        <fullName evidence="1">20S proteasome alpha subunit</fullName>
    </alternativeName>
    <alternativeName>
        <fullName evidence="1">Proteasome core protein PsmA</fullName>
    </alternativeName>
</protein>
<evidence type="ECO:0000255" key="1">
    <source>
        <dbReference type="HAMAP-Rule" id="MF_00289"/>
    </source>
</evidence>
<proteinExistence type="inferred from homology"/>
<dbReference type="EMBL" id="AJ248284">
    <property type="protein sequence ID" value="CAB49529.1"/>
    <property type="molecule type" value="Genomic_DNA"/>
</dbReference>
<dbReference type="EMBL" id="HE613800">
    <property type="protein sequence ID" value="CCE69999.1"/>
    <property type="molecule type" value="Genomic_DNA"/>
</dbReference>
<dbReference type="PIR" id="B75181">
    <property type="entry name" value="B75181"/>
</dbReference>
<dbReference type="RefSeq" id="WP_010867731.1">
    <property type="nucleotide sequence ID" value="NC_000868.1"/>
</dbReference>
<dbReference type="SMR" id="Q9V122"/>
<dbReference type="STRING" id="272844.PAB0417"/>
<dbReference type="MEROPS" id="T01.970"/>
<dbReference type="KEGG" id="pab:PAB0417"/>
<dbReference type="PATRIC" id="fig|272844.11.peg.645"/>
<dbReference type="eggNOG" id="arCOG00971">
    <property type="taxonomic scope" value="Archaea"/>
</dbReference>
<dbReference type="HOGENOM" id="CLU_035750_4_1_2"/>
<dbReference type="OrthoDB" id="9421at2157"/>
<dbReference type="PhylomeDB" id="Q9V122"/>
<dbReference type="Proteomes" id="UP000000810">
    <property type="component" value="Chromosome"/>
</dbReference>
<dbReference type="Proteomes" id="UP000009139">
    <property type="component" value="Chromosome"/>
</dbReference>
<dbReference type="GO" id="GO:0005737">
    <property type="term" value="C:cytoplasm"/>
    <property type="evidence" value="ECO:0007669"/>
    <property type="project" value="UniProtKB-SubCell"/>
</dbReference>
<dbReference type="GO" id="GO:0019773">
    <property type="term" value="C:proteasome core complex, alpha-subunit complex"/>
    <property type="evidence" value="ECO:0000250"/>
    <property type="project" value="UniProtKB"/>
</dbReference>
<dbReference type="GO" id="GO:0004298">
    <property type="term" value="F:threonine-type endopeptidase activity"/>
    <property type="evidence" value="ECO:0007669"/>
    <property type="project" value="InterPro"/>
</dbReference>
<dbReference type="GO" id="GO:0010498">
    <property type="term" value="P:proteasomal protein catabolic process"/>
    <property type="evidence" value="ECO:0007669"/>
    <property type="project" value="UniProtKB-UniRule"/>
</dbReference>
<dbReference type="GO" id="GO:0006511">
    <property type="term" value="P:ubiquitin-dependent protein catabolic process"/>
    <property type="evidence" value="ECO:0007669"/>
    <property type="project" value="InterPro"/>
</dbReference>
<dbReference type="CDD" id="cd03756">
    <property type="entry name" value="proteasome_alpha_archeal"/>
    <property type="match status" value="1"/>
</dbReference>
<dbReference type="FunFam" id="3.60.20.10:FF:000004">
    <property type="entry name" value="Proteasome subunit alpha type-4"/>
    <property type="match status" value="1"/>
</dbReference>
<dbReference type="Gene3D" id="3.60.20.10">
    <property type="entry name" value="Glutamine Phosphoribosylpyrophosphate, subunit 1, domain 1"/>
    <property type="match status" value="1"/>
</dbReference>
<dbReference type="HAMAP" id="MF_00289_A">
    <property type="entry name" value="Proteasome_A_A"/>
    <property type="match status" value="1"/>
</dbReference>
<dbReference type="InterPro" id="IPR029055">
    <property type="entry name" value="Ntn_hydrolases_N"/>
</dbReference>
<dbReference type="InterPro" id="IPR050115">
    <property type="entry name" value="Proteasome_alpha"/>
</dbReference>
<dbReference type="InterPro" id="IPR023332">
    <property type="entry name" value="Proteasome_alpha-type"/>
</dbReference>
<dbReference type="InterPro" id="IPR019982">
    <property type="entry name" value="Proteasome_asu_arc"/>
</dbReference>
<dbReference type="InterPro" id="IPR000426">
    <property type="entry name" value="Proteasome_asu_N"/>
</dbReference>
<dbReference type="InterPro" id="IPR001353">
    <property type="entry name" value="Proteasome_sua/b"/>
</dbReference>
<dbReference type="NCBIfam" id="TIGR03633">
    <property type="entry name" value="arc_protsome_A"/>
    <property type="match status" value="1"/>
</dbReference>
<dbReference type="NCBIfam" id="NF003075">
    <property type="entry name" value="PRK03996.1"/>
    <property type="match status" value="1"/>
</dbReference>
<dbReference type="PANTHER" id="PTHR11599">
    <property type="entry name" value="PROTEASOME SUBUNIT ALPHA/BETA"/>
    <property type="match status" value="1"/>
</dbReference>
<dbReference type="Pfam" id="PF00227">
    <property type="entry name" value="Proteasome"/>
    <property type="match status" value="1"/>
</dbReference>
<dbReference type="Pfam" id="PF10584">
    <property type="entry name" value="Proteasome_A_N"/>
    <property type="match status" value="1"/>
</dbReference>
<dbReference type="SMART" id="SM00948">
    <property type="entry name" value="Proteasome_A_N"/>
    <property type="match status" value="1"/>
</dbReference>
<dbReference type="SUPFAM" id="SSF56235">
    <property type="entry name" value="N-terminal nucleophile aminohydrolases (Ntn hydrolases)"/>
    <property type="match status" value="1"/>
</dbReference>
<dbReference type="PROSITE" id="PS00388">
    <property type="entry name" value="PROTEASOME_ALPHA_1"/>
    <property type="match status" value="1"/>
</dbReference>
<dbReference type="PROSITE" id="PS51475">
    <property type="entry name" value="PROTEASOME_ALPHA_2"/>
    <property type="match status" value="1"/>
</dbReference>
<gene>
    <name evidence="1" type="primary">psmA</name>
    <name type="ordered locus">PYRAB06070</name>
    <name type="ORF">PAB0417</name>
</gene>